<keyword id="KW-0067">ATP-binding</keyword>
<keyword id="KW-0319">Glycerol metabolism</keyword>
<keyword id="KW-0418">Kinase</keyword>
<keyword id="KW-0547">Nucleotide-binding</keyword>
<keyword id="KW-0597">Phosphoprotein</keyword>
<keyword id="KW-1185">Reference proteome</keyword>
<keyword id="KW-0808">Transferase</keyword>
<sequence>MSDKYIMAIDEGTTSTRAIIFDKKGNKVAEGQKEFRQYFPQPGWVEHDANEIWNAVLSTIANSFISSGIQPKQIAGIGITNQRETTIIWDKETGLPIYNAIVWQSRQTSDIAQKLIDEGYSDTIHEKTGLIIDAYFSATKIRWILDHVEGAQERAEKGELLFGTIDTWLTWKLTGGKVHVTDYSNASRTMLFNIHDLKWDKEILELLNIPEALLPEVKGNSEIYGQTAAYHFFGSQVPISGMAGDQQSALFGQLALEDGTVKNTYGTGSFIVMNTGNKPVLSKNNLLTTIGYSIDGKINFALEGSVFVSGSALQWLRDSMEIIESAPESERAANESTNHNEVYVVPAFTGLGAPYWDSDARGAVFGLTRGTTKNDFIKATLQSLAYQTRDVLDTMEKDTGIKIPVLRVDGGAAMNNYLLQFQSDLLNKSVERAGNLETTALGVAFLAGLAVGFWKDTDELKELFTVGRRFEPEMSDDAREYLYAGWKNAVEATRIFKHKINENL</sequence>
<comment type="function">
    <text evidence="1">Key enzyme in the regulation of glycerol uptake and metabolism. Catalyzes the phosphorylation of glycerol to yield sn-glycerol 3-phosphate.</text>
</comment>
<comment type="catalytic activity">
    <reaction evidence="1">
        <text>glycerol + ATP = sn-glycerol 3-phosphate + ADP + H(+)</text>
        <dbReference type="Rhea" id="RHEA:21644"/>
        <dbReference type="ChEBI" id="CHEBI:15378"/>
        <dbReference type="ChEBI" id="CHEBI:17754"/>
        <dbReference type="ChEBI" id="CHEBI:30616"/>
        <dbReference type="ChEBI" id="CHEBI:57597"/>
        <dbReference type="ChEBI" id="CHEBI:456216"/>
        <dbReference type="EC" id="2.7.1.30"/>
    </reaction>
</comment>
<comment type="activity regulation">
    <text evidence="1">Activated by phosphorylation and inhibited by fructose 1,6-bisphosphate (FBP).</text>
</comment>
<comment type="pathway">
    <text evidence="1">Polyol metabolism; glycerol degradation via glycerol kinase pathway; sn-glycerol 3-phosphate from glycerol: step 1/1.</text>
</comment>
<comment type="subunit">
    <text evidence="1">Homotetramer and homodimer (in equilibrium).</text>
</comment>
<comment type="PTM">
    <text evidence="1">The phosphoenolpyruvate-dependent sugar phosphotransferase system (PTS), including enzyme I, and histidine-containing protein (HPr) are required for the phosphorylation, which leads to the activation of the enzyme.</text>
</comment>
<comment type="similarity">
    <text evidence="1">Belongs to the FGGY kinase family.</text>
</comment>
<accession>Q1WVJ0</accession>
<dbReference type="EC" id="2.7.1.30" evidence="1"/>
<dbReference type="EMBL" id="CP000233">
    <property type="protein sequence ID" value="ABD98927.1"/>
    <property type="molecule type" value="Genomic_DNA"/>
</dbReference>
<dbReference type="RefSeq" id="WP_003700771.1">
    <property type="nucleotide sequence ID" value="NC_007929.1"/>
</dbReference>
<dbReference type="RefSeq" id="YP_535010.1">
    <property type="nucleotide sequence ID" value="NC_007929.1"/>
</dbReference>
<dbReference type="SMR" id="Q1WVJ0"/>
<dbReference type="STRING" id="362948.LSL_0110"/>
<dbReference type="KEGG" id="lsl:LSL_0110"/>
<dbReference type="PATRIC" id="fig|362948.14.peg.185"/>
<dbReference type="HOGENOM" id="CLU_009281_2_3_9"/>
<dbReference type="OrthoDB" id="9805576at2"/>
<dbReference type="UniPathway" id="UPA00618">
    <property type="reaction ID" value="UER00672"/>
</dbReference>
<dbReference type="Proteomes" id="UP000006559">
    <property type="component" value="Chromosome"/>
</dbReference>
<dbReference type="GO" id="GO:0005829">
    <property type="term" value="C:cytosol"/>
    <property type="evidence" value="ECO:0007669"/>
    <property type="project" value="TreeGrafter"/>
</dbReference>
<dbReference type="GO" id="GO:0005524">
    <property type="term" value="F:ATP binding"/>
    <property type="evidence" value="ECO:0007669"/>
    <property type="project" value="UniProtKB-UniRule"/>
</dbReference>
<dbReference type="GO" id="GO:0004370">
    <property type="term" value="F:glycerol kinase activity"/>
    <property type="evidence" value="ECO:0000250"/>
    <property type="project" value="UniProtKB"/>
</dbReference>
<dbReference type="GO" id="GO:0019563">
    <property type="term" value="P:glycerol catabolic process"/>
    <property type="evidence" value="ECO:0007669"/>
    <property type="project" value="UniProtKB-UniRule"/>
</dbReference>
<dbReference type="GO" id="GO:0006071">
    <property type="term" value="P:glycerol metabolic process"/>
    <property type="evidence" value="ECO:0000250"/>
    <property type="project" value="UniProtKB"/>
</dbReference>
<dbReference type="GO" id="GO:0006072">
    <property type="term" value="P:glycerol-3-phosphate metabolic process"/>
    <property type="evidence" value="ECO:0007669"/>
    <property type="project" value="InterPro"/>
</dbReference>
<dbReference type="CDD" id="cd07786">
    <property type="entry name" value="FGGY_EcGK_like"/>
    <property type="match status" value="1"/>
</dbReference>
<dbReference type="FunFam" id="3.30.420.40:FF:000007">
    <property type="entry name" value="Glycerol kinase"/>
    <property type="match status" value="1"/>
</dbReference>
<dbReference type="FunFam" id="3.30.420.40:FF:000008">
    <property type="entry name" value="Glycerol kinase"/>
    <property type="match status" value="1"/>
</dbReference>
<dbReference type="Gene3D" id="3.30.420.40">
    <property type="match status" value="2"/>
</dbReference>
<dbReference type="HAMAP" id="MF_00186">
    <property type="entry name" value="Glycerol_kin"/>
    <property type="match status" value="1"/>
</dbReference>
<dbReference type="InterPro" id="IPR043129">
    <property type="entry name" value="ATPase_NBD"/>
</dbReference>
<dbReference type="InterPro" id="IPR000577">
    <property type="entry name" value="Carb_kinase_FGGY"/>
</dbReference>
<dbReference type="InterPro" id="IPR018483">
    <property type="entry name" value="Carb_kinase_FGGY_CS"/>
</dbReference>
<dbReference type="InterPro" id="IPR018485">
    <property type="entry name" value="FGGY_C"/>
</dbReference>
<dbReference type="InterPro" id="IPR018484">
    <property type="entry name" value="FGGY_N"/>
</dbReference>
<dbReference type="InterPro" id="IPR005999">
    <property type="entry name" value="Glycerol_kin"/>
</dbReference>
<dbReference type="NCBIfam" id="TIGR01311">
    <property type="entry name" value="glycerol_kin"/>
    <property type="match status" value="1"/>
</dbReference>
<dbReference type="NCBIfam" id="NF000756">
    <property type="entry name" value="PRK00047.1"/>
    <property type="match status" value="1"/>
</dbReference>
<dbReference type="PANTHER" id="PTHR10196:SF69">
    <property type="entry name" value="GLYCEROL KINASE"/>
    <property type="match status" value="1"/>
</dbReference>
<dbReference type="PANTHER" id="PTHR10196">
    <property type="entry name" value="SUGAR KINASE"/>
    <property type="match status" value="1"/>
</dbReference>
<dbReference type="Pfam" id="PF02782">
    <property type="entry name" value="FGGY_C"/>
    <property type="match status" value="1"/>
</dbReference>
<dbReference type="Pfam" id="PF00370">
    <property type="entry name" value="FGGY_N"/>
    <property type="match status" value="1"/>
</dbReference>
<dbReference type="PIRSF" id="PIRSF000538">
    <property type="entry name" value="GlpK"/>
    <property type="match status" value="1"/>
</dbReference>
<dbReference type="SUPFAM" id="SSF53067">
    <property type="entry name" value="Actin-like ATPase domain"/>
    <property type="match status" value="2"/>
</dbReference>
<dbReference type="PROSITE" id="PS00933">
    <property type="entry name" value="FGGY_KINASES_1"/>
    <property type="match status" value="1"/>
</dbReference>
<dbReference type="PROSITE" id="PS00445">
    <property type="entry name" value="FGGY_KINASES_2"/>
    <property type="match status" value="1"/>
</dbReference>
<protein>
    <recommendedName>
        <fullName evidence="1">Glycerol kinase</fullName>
        <ecNumber evidence="1">2.7.1.30</ecNumber>
    </recommendedName>
    <alternativeName>
        <fullName evidence="1">ATP:glycerol 3-phosphotransferase</fullName>
    </alternativeName>
    <alternativeName>
        <fullName evidence="1">Glycerokinase</fullName>
        <shortName evidence="1">GK</shortName>
    </alternativeName>
</protein>
<evidence type="ECO:0000255" key="1">
    <source>
        <dbReference type="HAMAP-Rule" id="MF_00186"/>
    </source>
</evidence>
<gene>
    <name evidence="1" type="primary">glpK</name>
    <name type="ordered locus">LSL_0110</name>
</gene>
<proteinExistence type="inferred from homology"/>
<feature type="chain" id="PRO_1000020741" description="Glycerol kinase">
    <location>
        <begin position="1"/>
        <end position="504"/>
    </location>
</feature>
<feature type="binding site" evidence="1">
    <location>
        <position position="13"/>
    </location>
    <ligand>
        <name>ADP</name>
        <dbReference type="ChEBI" id="CHEBI:456216"/>
    </ligand>
</feature>
<feature type="binding site" evidence="1">
    <location>
        <position position="13"/>
    </location>
    <ligand>
        <name>ATP</name>
        <dbReference type="ChEBI" id="CHEBI:30616"/>
    </ligand>
</feature>
<feature type="binding site" evidence="1">
    <location>
        <position position="13"/>
    </location>
    <ligand>
        <name>sn-glycerol 3-phosphate</name>
        <dbReference type="ChEBI" id="CHEBI:57597"/>
    </ligand>
</feature>
<feature type="binding site" evidence="1">
    <location>
        <position position="14"/>
    </location>
    <ligand>
        <name>ATP</name>
        <dbReference type="ChEBI" id="CHEBI:30616"/>
    </ligand>
</feature>
<feature type="binding site" evidence="1">
    <location>
        <position position="15"/>
    </location>
    <ligand>
        <name>ATP</name>
        <dbReference type="ChEBI" id="CHEBI:30616"/>
    </ligand>
</feature>
<feature type="binding site" evidence="1">
    <location>
        <position position="17"/>
    </location>
    <ligand>
        <name>ADP</name>
        <dbReference type="ChEBI" id="CHEBI:456216"/>
    </ligand>
</feature>
<feature type="binding site" evidence="1">
    <location>
        <position position="83"/>
    </location>
    <ligand>
        <name>glycerol</name>
        <dbReference type="ChEBI" id="CHEBI:17754"/>
    </ligand>
</feature>
<feature type="binding site" evidence="1">
    <location>
        <position position="83"/>
    </location>
    <ligand>
        <name>sn-glycerol 3-phosphate</name>
        <dbReference type="ChEBI" id="CHEBI:57597"/>
    </ligand>
</feature>
<feature type="binding site" evidence="1">
    <location>
        <position position="84"/>
    </location>
    <ligand>
        <name>glycerol</name>
        <dbReference type="ChEBI" id="CHEBI:17754"/>
    </ligand>
</feature>
<feature type="binding site" evidence="1">
    <location>
        <position position="84"/>
    </location>
    <ligand>
        <name>sn-glycerol 3-phosphate</name>
        <dbReference type="ChEBI" id="CHEBI:57597"/>
    </ligand>
</feature>
<feature type="binding site" evidence="1">
    <location>
        <position position="135"/>
    </location>
    <ligand>
        <name>glycerol</name>
        <dbReference type="ChEBI" id="CHEBI:17754"/>
    </ligand>
</feature>
<feature type="binding site" evidence="1">
    <location>
        <position position="135"/>
    </location>
    <ligand>
        <name>sn-glycerol 3-phosphate</name>
        <dbReference type="ChEBI" id="CHEBI:57597"/>
    </ligand>
</feature>
<feature type="binding site" evidence="1">
    <location>
        <position position="245"/>
    </location>
    <ligand>
        <name>glycerol</name>
        <dbReference type="ChEBI" id="CHEBI:17754"/>
    </ligand>
</feature>
<feature type="binding site" evidence="1">
    <location>
        <position position="245"/>
    </location>
    <ligand>
        <name>sn-glycerol 3-phosphate</name>
        <dbReference type="ChEBI" id="CHEBI:57597"/>
    </ligand>
</feature>
<feature type="binding site" evidence="1">
    <location>
        <position position="246"/>
    </location>
    <ligand>
        <name>glycerol</name>
        <dbReference type="ChEBI" id="CHEBI:17754"/>
    </ligand>
</feature>
<feature type="binding site" evidence="1">
    <location>
        <position position="267"/>
    </location>
    <ligand>
        <name>ADP</name>
        <dbReference type="ChEBI" id="CHEBI:456216"/>
    </ligand>
</feature>
<feature type="binding site" evidence="1">
    <location>
        <position position="267"/>
    </location>
    <ligand>
        <name>ATP</name>
        <dbReference type="ChEBI" id="CHEBI:30616"/>
    </ligand>
</feature>
<feature type="binding site" evidence="1">
    <location>
        <position position="310"/>
    </location>
    <ligand>
        <name>ADP</name>
        <dbReference type="ChEBI" id="CHEBI:456216"/>
    </ligand>
</feature>
<feature type="binding site" evidence="1">
    <location>
        <position position="310"/>
    </location>
    <ligand>
        <name>ATP</name>
        <dbReference type="ChEBI" id="CHEBI:30616"/>
    </ligand>
</feature>
<feature type="binding site" evidence="1">
    <location>
        <position position="314"/>
    </location>
    <ligand>
        <name>ATP</name>
        <dbReference type="ChEBI" id="CHEBI:30616"/>
    </ligand>
</feature>
<feature type="binding site" evidence="1">
    <location>
        <position position="411"/>
    </location>
    <ligand>
        <name>ADP</name>
        <dbReference type="ChEBI" id="CHEBI:456216"/>
    </ligand>
</feature>
<feature type="binding site" evidence="1">
    <location>
        <position position="411"/>
    </location>
    <ligand>
        <name>ATP</name>
        <dbReference type="ChEBI" id="CHEBI:30616"/>
    </ligand>
</feature>
<feature type="binding site" evidence="1">
    <location>
        <position position="415"/>
    </location>
    <ligand>
        <name>ADP</name>
        <dbReference type="ChEBI" id="CHEBI:456216"/>
    </ligand>
</feature>
<feature type="modified residue" description="Phosphohistidine; by HPr" evidence="1">
    <location>
        <position position="231"/>
    </location>
</feature>
<name>GLPK_LIGS1</name>
<reference key="1">
    <citation type="journal article" date="2006" name="Proc. Natl. Acad. Sci. U.S.A.">
        <title>Multireplicon genome architecture of Lactobacillus salivarius.</title>
        <authorList>
            <person name="Claesson M.J."/>
            <person name="Li Y."/>
            <person name="Leahy S."/>
            <person name="Canchaya C."/>
            <person name="van Pijkeren J.P."/>
            <person name="Cerdeno-Tarraga A.M."/>
            <person name="Parkhill J."/>
            <person name="Flynn S."/>
            <person name="O'Sullivan G.C."/>
            <person name="Collins J.K."/>
            <person name="Higgins D."/>
            <person name="Shanahan F."/>
            <person name="Fitzgerald G.F."/>
            <person name="van Sinderen D."/>
            <person name="O'Toole P.W."/>
        </authorList>
    </citation>
    <scope>NUCLEOTIDE SEQUENCE [LARGE SCALE GENOMIC DNA]</scope>
    <source>
        <strain>UCC118</strain>
    </source>
</reference>
<organism>
    <name type="scientific">Ligilactobacillus salivarius (strain UCC118)</name>
    <name type="common">Lactobacillus salivarius</name>
    <dbReference type="NCBI Taxonomy" id="362948"/>
    <lineage>
        <taxon>Bacteria</taxon>
        <taxon>Bacillati</taxon>
        <taxon>Bacillota</taxon>
        <taxon>Bacilli</taxon>
        <taxon>Lactobacillales</taxon>
        <taxon>Lactobacillaceae</taxon>
        <taxon>Ligilactobacillus</taxon>
    </lineage>
</organism>